<reference key="1">
    <citation type="journal article" date="2008" name="Infect. Immun.">
        <title>Genomic comparison of virulent Rickettsia rickettsii Sheila Smith and avirulent Rickettsia rickettsii Iowa.</title>
        <authorList>
            <person name="Ellison D.W."/>
            <person name="Clark T.R."/>
            <person name="Sturdevant D.E."/>
            <person name="Virtaneva K."/>
            <person name="Porcella S.F."/>
            <person name="Hackstadt T."/>
        </authorList>
    </citation>
    <scope>NUCLEOTIDE SEQUENCE [LARGE SCALE GENOMIC DNA]</scope>
    <source>
        <strain>Iowa</strain>
    </source>
</reference>
<keyword id="KW-1003">Cell membrane</keyword>
<keyword id="KW-0350">Heme biosynthesis</keyword>
<keyword id="KW-0408">Iron</keyword>
<keyword id="KW-0472">Membrane</keyword>
<keyword id="KW-0479">Metal-binding</keyword>
<keyword id="KW-0560">Oxidoreductase</keyword>
<keyword id="KW-0812">Transmembrane</keyword>
<keyword id="KW-1133">Transmembrane helix</keyword>
<organism>
    <name type="scientific">Rickettsia rickettsii (strain Iowa)</name>
    <dbReference type="NCBI Taxonomy" id="452659"/>
    <lineage>
        <taxon>Bacteria</taxon>
        <taxon>Pseudomonadati</taxon>
        <taxon>Pseudomonadota</taxon>
        <taxon>Alphaproteobacteria</taxon>
        <taxon>Rickettsiales</taxon>
        <taxon>Rickettsiaceae</taxon>
        <taxon>Rickettsieae</taxon>
        <taxon>Rickettsia</taxon>
        <taxon>spotted fever group</taxon>
    </lineage>
</organism>
<proteinExistence type="inferred from homology"/>
<gene>
    <name evidence="1" type="primary">ctaA</name>
    <name type="ordered locus">RrIowa_0412</name>
</gene>
<accession>B0BWT1</accession>
<sequence>MQKSLITKWLCINCIMVIATIVIGGITRLTGSGLSIVEWRPVTGILPPFSFESWQSEFAKYKAFPEYNSVNYGITLSQFKFIYLLEFIHRLLGRITALIYIVPVIYFYFKDVIKNRDMLPYIIALLLFCVQGFIGWYMVKSGLLNSPYVSHFRLAFHLIIAVIIYHILFYQLIKNRCDILLIPSQTDFKLPLIFSGIAITVVYVQIFLGALVAGLDAGLIYNSFPLMDDRFIPMEIKDNFFDLKNWYDPVFIQFIHRLVGYSVFLVVVVLIICLLKIEHPKLNKIAYFLMIALFMQVSTGIITLLYSVPIIIASIHQLFAIILLSVIIWCYFLIKSF</sequence>
<dbReference type="EC" id="1.17.99.9" evidence="1"/>
<dbReference type="EMBL" id="CP000766">
    <property type="protein sequence ID" value="ABY72307.1"/>
    <property type="molecule type" value="Genomic_DNA"/>
</dbReference>
<dbReference type="RefSeq" id="WP_012262286.1">
    <property type="nucleotide sequence ID" value="NC_010263.3"/>
</dbReference>
<dbReference type="SMR" id="B0BWT1"/>
<dbReference type="KEGG" id="rrj:RrIowa_0412"/>
<dbReference type="eggNOG" id="COG1612">
    <property type="taxonomic scope" value="Bacteria"/>
</dbReference>
<dbReference type="HOGENOM" id="CLU_017627_0_0_5"/>
<dbReference type="UniPathway" id="UPA00269">
    <property type="reaction ID" value="UER00713"/>
</dbReference>
<dbReference type="Proteomes" id="UP000000796">
    <property type="component" value="Chromosome"/>
</dbReference>
<dbReference type="GO" id="GO:0005886">
    <property type="term" value="C:plasma membrane"/>
    <property type="evidence" value="ECO:0007669"/>
    <property type="project" value="UniProtKB-SubCell"/>
</dbReference>
<dbReference type="GO" id="GO:0046872">
    <property type="term" value="F:metal ion binding"/>
    <property type="evidence" value="ECO:0007669"/>
    <property type="project" value="UniProtKB-KW"/>
</dbReference>
<dbReference type="GO" id="GO:0016653">
    <property type="term" value="F:oxidoreductase activity, acting on NAD(P)H, heme protein as acceptor"/>
    <property type="evidence" value="ECO:0007669"/>
    <property type="project" value="InterPro"/>
</dbReference>
<dbReference type="GO" id="GO:0006784">
    <property type="term" value="P:heme A biosynthetic process"/>
    <property type="evidence" value="ECO:0007669"/>
    <property type="project" value="UniProtKB-UniRule"/>
</dbReference>
<dbReference type="HAMAP" id="MF_01665">
    <property type="entry name" value="HemeA_synth_type2"/>
    <property type="match status" value="1"/>
</dbReference>
<dbReference type="InterPro" id="IPR003780">
    <property type="entry name" value="COX15/CtaA_fam"/>
</dbReference>
<dbReference type="InterPro" id="IPR023754">
    <property type="entry name" value="HemeA_Synthase_type2"/>
</dbReference>
<dbReference type="PANTHER" id="PTHR23289">
    <property type="entry name" value="CYTOCHROME C OXIDASE ASSEMBLY PROTEIN COX15"/>
    <property type="match status" value="1"/>
</dbReference>
<dbReference type="PANTHER" id="PTHR23289:SF2">
    <property type="entry name" value="CYTOCHROME C OXIDASE ASSEMBLY PROTEIN COX15 HOMOLOG"/>
    <property type="match status" value="1"/>
</dbReference>
<dbReference type="Pfam" id="PF02628">
    <property type="entry name" value="COX15-CtaA"/>
    <property type="match status" value="1"/>
</dbReference>
<protein>
    <recommendedName>
        <fullName evidence="1">Heme A synthase</fullName>
        <shortName evidence="1">HAS</shortName>
        <ecNumber evidence="1">1.17.99.9</ecNumber>
    </recommendedName>
    <alternativeName>
        <fullName evidence="1">Cytochrome aa3-controlling protein</fullName>
    </alternativeName>
</protein>
<evidence type="ECO:0000255" key="1">
    <source>
        <dbReference type="HAMAP-Rule" id="MF_01665"/>
    </source>
</evidence>
<comment type="function">
    <text evidence="1">Catalyzes the conversion of heme O to heme A by two successive hydroxylations of the methyl group at C8. The first hydroxylation forms heme I, the second hydroxylation results in an unstable dihydroxymethyl group, which spontaneously dehydrates, resulting in the formyl group of heme A.</text>
</comment>
<comment type="catalytic activity">
    <reaction evidence="1">
        <text>Fe(II)-heme o + 2 A + H2O = Fe(II)-heme a + 2 AH2</text>
        <dbReference type="Rhea" id="RHEA:63388"/>
        <dbReference type="ChEBI" id="CHEBI:13193"/>
        <dbReference type="ChEBI" id="CHEBI:15377"/>
        <dbReference type="ChEBI" id="CHEBI:17499"/>
        <dbReference type="ChEBI" id="CHEBI:60530"/>
        <dbReference type="ChEBI" id="CHEBI:61715"/>
        <dbReference type="EC" id="1.17.99.9"/>
    </reaction>
    <physiologicalReaction direction="left-to-right" evidence="1">
        <dbReference type="Rhea" id="RHEA:63389"/>
    </physiologicalReaction>
</comment>
<comment type="cofactor">
    <cofactor evidence="1">
        <name>heme b</name>
        <dbReference type="ChEBI" id="CHEBI:60344"/>
    </cofactor>
</comment>
<comment type="pathway">
    <text evidence="1">Porphyrin-containing compound metabolism; heme A biosynthesis; heme A from heme O: step 1/1.</text>
</comment>
<comment type="subunit">
    <text evidence="1">Interacts with CtaB.</text>
</comment>
<comment type="subcellular location">
    <subcellularLocation>
        <location evidence="1">Cell membrane</location>
        <topology evidence="1">Multi-pass membrane protein</topology>
    </subcellularLocation>
</comment>
<comment type="similarity">
    <text evidence="1">Belongs to the COX15/CtaA family. Type 2 subfamily.</text>
</comment>
<name>CTAA_RICRO</name>
<feature type="chain" id="PRO_0000349079" description="Heme A synthase">
    <location>
        <begin position="1"/>
        <end position="337"/>
    </location>
</feature>
<feature type="transmembrane region" description="Helical" evidence="1">
    <location>
        <begin position="6"/>
        <end position="26"/>
    </location>
</feature>
<feature type="transmembrane region" description="Helical" evidence="1">
    <location>
        <begin position="87"/>
        <end position="107"/>
    </location>
</feature>
<feature type="transmembrane region" description="Helical" evidence="1">
    <location>
        <begin position="119"/>
        <end position="139"/>
    </location>
</feature>
<feature type="transmembrane region" description="Helical" evidence="1">
    <location>
        <begin position="154"/>
        <end position="174"/>
    </location>
</feature>
<feature type="transmembrane region" description="Helical" evidence="1">
    <location>
        <begin position="192"/>
        <end position="212"/>
    </location>
</feature>
<feature type="transmembrane region" description="Helical" evidence="1">
    <location>
        <begin position="258"/>
        <end position="278"/>
    </location>
</feature>
<feature type="transmembrane region" description="Helical" evidence="1">
    <location>
        <begin position="285"/>
        <end position="305"/>
    </location>
</feature>
<feature type="transmembrane region" description="Helical" evidence="1">
    <location>
        <begin position="308"/>
        <end position="328"/>
    </location>
</feature>
<feature type="binding site" description="axial binding residue" evidence="1">
    <location>
        <position position="256"/>
    </location>
    <ligand>
        <name>heme</name>
        <dbReference type="ChEBI" id="CHEBI:30413"/>
    </ligand>
    <ligandPart>
        <name>Fe</name>
        <dbReference type="ChEBI" id="CHEBI:18248"/>
    </ligandPart>
</feature>
<feature type="binding site" description="axial binding residue" evidence="1">
    <location>
        <position position="316"/>
    </location>
    <ligand>
        <name>heme</name>
        <dbReference type="ChEBI" id="CHEBI:30413"/>
    </ligand>
    <ligandPart>
        <name>Fe</name>
        <dbReference type="ChEBI" id="CHEBI:18248"/>
    </ligandPart>
</feature>